<reference key="1">
    <citation type="submission" date="1993-06" db="EMBL/GenBank/DDBJ databases">
        <authorList>
            <person name="Leonhardt K.G."/>
        </authorList>
    </citation>
    <scope>NUCLEOTIDE SEQUENCE [GENOMIC DNA]</scope>
</reference>
<reference key="2">
    <citation type="journal article" date="2001" name="DNA Res.">
        <title>Complete genomic sequence of the filamentous nitrogen-fixing cyanobacterium Anabaena sp. strain PCC 7120.</title>
        <authorList>
            <person name="Kaneko T."/>
            <person name="Nakamura Y."/>
            <person name="Wolk C.P."/>
            <person name="Kuritz T."/>
            <person name="Sasamoto S."/>
            <person name="Watanabe A."/>
            <person name="Iriguchi M."/>
            <person name="Ishikawa A."/>
            <person name="Kawashima K."/>
            <person name="Kimura T."/>
            <person name="Kishida Y."/>
            <person name="Kohara M."/>
            <person name="Matsumoto M."/>
            <person name="Matsuno A."/>
            <person name="Muraki A."/>
            <person name="Nakazaki N."/>
            <person name="Shimpo S."/>
            <person name="Sugimoto M."/>
            <person name="Takazawa M."/>
            <person name="Yamada M."/>
            <person name="Yasuda M."/>
            <person name="Tabata S."/>
        </authorList>
    </citation>
    <scope>NUCLEOTIDE SEQUENCE [LARGE SCALE GENOMIC DNA]</scope>
    <source>
        <strain>PCC 7120 / SAG 25.82 / UTEX 2576</strain>
    </source>
</reference>
<dbReference type="EMBL" id="X14577">
    <property type="protein sequence ID" value="CAA32721.1"/>
    <property type="molecule type" value="Genomic_DNA"/>
</dbReference>
<dbReference type="EMBL" id="BA000019">
    <property type="protein sequence ID" value="BAB74105.1"/>
    <property type="molecule type" value="Genomic_DNA"/>
</dbReference>
<dbReference type="PIR" id="AG2106">
    <property type="entry name" value="AG2106"/>
</dbReference>
<dbReference type="RefSeq" id="WP_010996562.1">
    <property type="nucleotide sequence ID" value="NZ_RSCN01000002.1"/>
</dbReference>
<dbReference type="SMR" id="Q44510"/>
<dbReference type="STRING" id="103690.gene:10494436"/>
<dbReference type="ESTHER" id="noss1-y2406">
    <property type="family name" value="6_AlphaBeta_hydrolase"/>
</dbReference>
<dbReference type="KEGG" id="ana:alr2406"/>
<dbReference type="eggNOG" id="COG3208">
    <property type="taxonomic scope" value="Bacteria"/>
</dbReference>
<dbReference type="OrthoDB" id="464067at2"/>
<dbReference type="Proteomes" id="UP000002483">
    <property type="component" value="Chromosome"/>
</dbReference>
<dbReference type="GO" id="GO:0009058">
    <property type="term" value="P:biosynthetic process"/>
    <property type="evidence" value="ECO:0007669"/>
    <property type="project" value="InterPro"/>
</dbReference>
<dbReference type="Gene3D" id="3.40.50.1820">
    <property type="entry name" value="alpha/beta hydrolase"/>
    <property type="match status" value="1"/>
</dbReference>
<dbReference type="InterPro" id="IPR029058">
    <property type="entry name" value="AB_hydrolase_fold"/>
</dbReference>
<dbReference type="InterPro" id="IPR001031">
    <property type="entry name" value="Thioesterase"/>
</dbReference>
<dbReference type="Pfam" id="PF00975">
    <property type="entry name" value="Thioesterase"/>
    <property type="match status" value="1"/>
</dbReference>
<dbReference type="SUPFAM" id="SSF53474">
    <property type="entry name" value="alpha/beta-Hydrolases"/>
    <property type="match status" value="1"/>
</dbReference>
<protein>
    <recommendedName>
        <fullName>Uncharacterized protein alr2406</fullName>
    </recommendedName>
</protein>
<evidence type="ECO:0000305" key="1"/>
<gene>
    <name type="ordered locus">alr2406</name>
</gene>
<accession>Q44510</accession>
<organism>
    <name type="scientific">Nostoc sp. (strain PCC 7120 / SAG 25.82 / UTEX 2576)</name>
    <dbReference type="NCBI Taxonomy" id="103690"/>
    <lineage>
        <taxon>Bacteria</taxon>
        <taxon>Bacillati</taxon>
        <taxon>Cyanobacteriota</taxon>
        <taxon>Cyanophyceae</taxon>
        <taxon>Nostocales</taxon>
        <taxon>Nostocaceae</taxon>
        <taxon>Nostoc</taxon>
    </lineage>
</organism>
<keyword id="KW-1185">Reference proteome</keyword>
<feature type="chain" id="PRO_0000157864" description="Uncharacterized protein alr2406">
    <location>
        <begin position="1"/>
        <end position="250"/>
    </location>
</feature>
<sequence>MSDDLDVLWISSSPVLQRFDKPLLQYISKDVNVAQWEYRHHRDEGSSIDEAVDLLAEFMGQCPYPVNLAGHAAGGAIALSFARRYPKKVRSLSLLAVASQPANTWHAHYYLQRQLFTISREQILANTVRNLFGEQPSHTTKKLVAVLDRDLEQSPLLHSLFKLVHLPEGGVNMPLMICGSKNDPIVSSTTLQDWSNCLKPEDHLWECPKGHHFFHYFYPQTVGDQLLNFWQLRHLQPMQTSYLVSHHWQN</sequence>
<proteinExistence type="predicted"/>
<name>Y2406_NOSS1</name>
<comment type="similarity">
    <text evidence="1">To Synechocystis PCC 6803 sll0249.</text>
</comment>